<dbReference type="EC" id="3.6.4.-" evidence="1"/>
<dbReference type="EMBL" id="AE000516">
    <property type="protein sequence ID" value="AAK45299.1"/>
    <property type="molecule type" value="Genomic_DNA"/>
</dbReference>
<dbReference type="PIR" id="G70622">
    <property type="entry name" value="G70622"/>
</dbReference>
<dbReference type="RefSeq" id="WP_003405273.1">
    <property type="nucleotide sequence ID" value="NZ_KK341227.1"/>
</dbReference>
<dbReference type="SMR" id="P9WMQ4"/>
<dbReference type="KEGG" id="mtc:MT1048"/>
<dbReference type="PATRIC" id="fig|83331.31.peg.1125"/>
<dbReference type="HOGENOM" id="CLU_005122_2_0_11"/>
<dbReference type="Proteomes" id="UP000001020">
    <property type="component" value="Chromosome"/>
</dbReference>
<dbReference type="GO" id="GO:0005737">
    <property type="term" value="C:cytoplasm"/>
    <property type="evidence" value="ECO:0007669"/>
    <property type="project" value="UniProtKB-SubCell"/>
</dbReference>
<dbReference type="GO" id="GO:0005524">
    <property type="term" value="F:ATP binding"/>
    <property type="evidence" value="ECO:0007669"/>
    <property type="project" value="UniProtKB-UniRule"/>
</dbReference>
<dbReference type="GO" id="GO:0003684">
    <property type="term" value="F:damaged DNA binding"/>
    <property type="evidence" value="ECO:0007669"/>
    <property type="project" value="InterPro"/>
</dbReference>
<dbReference type="GO" id="GO:0003678">
    <property type="term" value="F:DNA helicase activity"/>
    <property type="evidence" value="ECO:0007669"/>
    <property type="project" value="TreeGrafter"/>
</dbReference>
<dbReference type="GO" id="GO:0016787">
    <property type="term" value="F:hydrolase activity"/>
    <property type="evidence" value="ECO:0007669"/>
    <property type="project" value="UniProtKB-KW"/>
</dbReference>
<dbReference type="GO" id="GO:0006355">
    <property type="term" value="P:regulation of DNA-templated transcription"/>
    <property type="evidence" value="ECO:0007669"/>
    <property type="project" value="UniProtKB-UniRule"/>
</dbReference>
<dbReference type="GO" id="GO:0000716">
    <property type="term" value="P:transcription-coupled nucleotide-excision repair, DNA damage recognition"/>
    <property type="evidence" value="ECO:0007669"/>
    <property type="project" value="UniProtKB-UniRule"/>
</dbReference>
<dbReference type="CDD" id="cd17991">
    <property type="entry name" value="DEXHc_TRCF"/>
    <property type="match status" value="1"/>
</dbReference>
<dbReference type="CDD" id="cd18810">
    <property type="entry name" value="SF2_C_TRCF"/>
    <property type="match status" value="1"/>
</dbReference>
<dbReference type="FunFam" id="3.30.2060.10:FF:000004">
    <property type="entry name" value="Transcription-repair-coupling factor"/>
    <property type="match status" value="1"/>
</dbReference>
<dbReference type="FunFam" id="3.40.50.300:FF:000300">
    <property type="entry name" value="Transcription-repair-coupling factor"/>
    <property type="match status" value="1"/>
</dbReference>
<dbReference type="FunFam" id="3.40.50.300:FF:000546">
    <property type="entry name" value="Transcription-repair-coupling factor"/>
    <property type="match status" value="1"/>
</dbReference>
<dbReference type="FunFam" id="3.90.1150.50:FF:000003">
    <property type="entry name" value="Transcription-repair-coupling factor"/>
    <property type="match status" value="1"/>
</dbReference>
<dbReference type="Gene3D" id="2.40.10.170">
    <property type="match status" value="1"/>
</dbReference>
<dbReference type="Gene3D" id="3.40.50.11180">
    <property type="match status" value="1"/>
</dbReference>
<dbReference type="Gene3D" id="3.40.50.300">
    <property type="entry name" value="P-loop containing nucleotide triphosphate hydrolases"/>
    <property type="match status" value="2"/>
</dbReference>
<dbReference type="Gene3D" id="3.30.2060.10">
    <property type="entry name" value="Penicillin-binding protein 1b domain"/>
    <property type="match status" value="1"/>
</dbReference>
<dbReference type="Gene3D" id="3.90.1150.50">
    <property type="entry name" value="Transcription-repair-coupling factor, D7 domain"/>
    <property type="match status" value="1"/>
</dbReference>
<dbReference type="HAMAP" id="MF_00969">
    <property type="entry name" value="TRCF"/>
    <property type="match status" value="1"/>
</dbReference>
<dbReference type="InterPro" id="IPR003711">
    <property type="entry name" value="CarD-like/TRCF_RID"/>
</dbReference>
<dbReference type="InterPro" id="IPR036101">
    <property type="entry name" value="CarD-like/TRCF_RID_sf"/>
</dbReference>
<dbReference type="InterPro" id="IPR011545">
    <property type="entry name" value="DEAD/DEAH_box_helicase_dom"/>
</dbReference>
<dbReference type="InterPro" id="IPR014001">
    <property type="entry name" value="Helicase_ATP-bd"/>
</dbReference>
<dbReference type="InterPro" id="IPR001650">
    <property type="entry name" value="Helicase_C-like"/>
</dbReference>
<dbReference type="InterPro" id="IPR004576">
    <property type="entry name" value="Mfd"/>
</dbReference>
<dbReference type="InterPro" id="IPR027417">
    <property type="entry name" value="P-loop_NTPase"/>
</dbReference>
<dbReference type="InterPro" id="IPR047112">
    <property type="entry name" value="RecG/Mfd"/>
</dbReference>
<dbReference type="InterPro" id="IPR037235">
    <property type="entry name" value="TRCF-like_C_D7"/>
</dbReference>
<dbReference type="InterPro" id="IPR005118">
    <property type="entry name" value="TRCF_C"/>
</dbReference>
<dbReference type="InterPro" id="IPR041471">
    <property type="entry name" value="UvrB_inter"/>
</dbReference>
<dbReference type="NCBIfam" id="TIGR00580">
    <property type="entry name" value="mfd"/>
    <property type="match status" value="1"/>
</dbReference>
<dbReference type="PANTHER" id="PTHR47964">
    <property type="entry name" value="ATP-DEPENDENT DNA HELICASE HOMOLOG RECG, CHLOROPLASTIC"/>
    <property type="match status" value="1"/>
</dbReference>
<dbReference type="PANTHER" id="PTHR47964:SF1">
    <property type="entry name" value="ATP-DEPENDENT DNA HELICASE HOMOLOG RECG, CHLOROPLASTIC"/>
    <property type="match status" value="1"/>
</dbReference>
<dbReference type="Pfam" id="PF02559">
    <property type="entry name" value="CarD_TRCF_RID"/>
    <property type="match status" value="1"/>
</dbReference>
<dbReference type="Pfam" id="PF00270">
    <property type="entry name" value="DEAD"/>
    <property type="match status" value="1"/>
</dbReference>
<dbReference type="Pfam" id="PF00271">
    <property type="entry name" value="Helicase_C"/>
    <property type="match status" value="1"/>
</dbReference>
<dbReference type="Pfam" id="PF03461">
    <property type="entry name" value="TRCF"/>
    <property type="match status" value="1"/>
</dbReference>
<dbReference type="Pfam" id="PF17757">
    <property type="entry name" value="UvrB_inter"/>
    <property type="match status" value="1"/>
</dbReference>
<dbReference type="SMART" id="SM01058">
    <property type="entry name" value="CarD_TRCF"/>
    <property type="match status" value="1"/>
</dbReference>
<dbReference type="SMART" id="SM00487">
    <property type="entry name" value="DEXDc"/>
    <property type="match status" value="1"/>
</dbReference>
<dbReference type="SMART" id="SM00490">
    <property type="entry name" value="HELICc"/>
    <property type="match status" value="1"/>
</dbReference>
<dbReference type="SMART" id="SM00982">
    <property type="entry name" value="TRCF"/>
    <property type="match status" value="1"/>
</dbReference>
<dbReference type="SUPFAM" id="SSF141259">
    <property type="entry name" value="CarD-like"/>
    <property type="match status" value="1"/>
</dbReference>
<dbReference type="SUPFAM" id="SSF52540">
    <property type="entry name" value="P-loop containing nucleoside triphosphate hydrolases"/>
    <property type="match status" value="4"/>
</dbReference>
<dbReference type="SUPFAM" id="SSF143517">
    <property type="entry name" value="TRCF domain-like"/>
    <property type="match status" value="1"/>
</dbReference>
<dbReference type="PROSITE" id="PS51192">
    <property type="entry name" value="HELICASE_ATP_BIND_1"/>
    <property type="match status" value="1"/>
</dbReference>
<dbReference type="PROSITE" id="PS51194">
    <property type="entry name" value="HELICASE_CTER"/>
    <property type="match status" value="1"/>
</dbReference>
<name>MFD_MYCTO</name>
<keyword id="KW-0067">ATP-binding</keyword>
<keyword id="KW-0963">Cytoplasm</keyword>
<keyword id="KW-0227">DNA damage</keyword>
<keyword id="KW-0234">DNA repair</keyword>
<keyword id="KW-0238">DNA-binding</keyword>
<keyword id="KW-0347">Helicase</keyword>
<keyword id="KW-0378">Hydrolase</keyword>
<keyword id="KW-0547">Nucleotide-binding</keyword>
<keyword id="KW-1185">Reference proteome</keyword>
<comment type="function">
    <text evidence="1">Couples transcription and DNA repair by recognizing RNA polymerase (RNAP) stalled at DNA lesions. Mediates ATP-dependent release of RNAP and its truncated transcript from the DNA, and recruitment of nucleotide excision repair machinery to the damaged site.</text>
</comment>
<comment type="subcellular location">
    <subcellularLocation>
        <location evidence="1">Cytoplasm</location>
    </subcellularLocation>
</comment>
<comment type="similarity">
    <text evidence="1">In the N-terminal section; belongs to the UvrB family.</text>
</comment>
<comment type="similarity">
    <text evidence="1">In the C-terminal section; belongs to the helicase family. RecG subfamily.</text>
</comment>
<organism>
    <name type="scientific">Mycobacterium tuberculosis (strain CDC 1551 / Oshkosh)</name>
    <dbReference type="NCBI Taxonomy" id="83331"/>
    <lineage>
        <taxon>Bacteria</taxon>
        <taxon>Bacillati</taxon>
        <taxon>Actinomycetota</taxon>
        <taxon>Actinomycetes</taxon>
        <taxon>Mycobacteriales</taxon>
        <taxon>Mycobacteriaceae</taxon>
        <taxon>Mycobacterium</taxon>
        <taxon>Mycobacterium tuberculosis complex</taxon>
    </lineage>
</organism>
<sequence>MTAPGPACSDTPIAGLVELALSAPTFQQLMQRAGGRPDELTLIAPASARLLVASALARQGPLLVVTATGREADDLAAELRGVFGDAVALLPSWETLPHERLSPGVDTVGTRLMALRRLAHPDDAQLGPPLGVVVTSVRSLLQPMTPQLGMMEPLTLTVGDESPFDGVVARLVELAYTRVDMVGRRGEFAVRGGILDIFAPTAEHPVRVEFWGDEITEMRMFSVADQRSIPEIDIHTLVAFACRELLLSEDVRARAAQLAARHPAAESTVTGSASDMLAKLAEGIAVDGMEAVLPVLWSDGHALLTDQLPDGTPVLVCDPEKVRTRAADLIRTGREFLEASWSVAALGTAENQAPVDVEQLGGSGFVELDQVRAAAARTGHPWWTLSQLSDESAIELDVRAAPSARGHQRDIDEIFAMLRAHIATGGYAALVAPGTGTAHRVVERLSESDTPAGMLDPGQAPKPGVVGVLQGPLRDGVIIPGANLVVITETDLTGSRVSAAEGKRLAAKRRNIVDPLALTAGDLVVHDQHGIGRFVEMVERTVGGARREYLVLEYASAKRGGGAKNTDKLYVPMDSLDQLSRYVGGQAPALSRLGGSDWANTKTKARRAVREIAGELVSLYAKRQASPGHAFSPDTPWQAELEDAFGFTETVDQLTAIEEVKADMEKPIPMDRVICGDVGYGKTEIAVRAAFKAVQDGKQVAVLVPTTLLADQHLQTFGERMSGFPVTIKGLSRFTDAAESRAVIDGLADGSVDIVIGTHRLLQTGVRWKDLGLVVVDEEQRFGVEHKEHIKSLRTHVDVLTMSATPIPRTLEMSLAGIREMSTILTPPEERYPVLTYVGPHDDKQIAAALRRELLRDGQAFYVHNRVSSIDAAAARVRELVPEARVVVAHGQMPEDLLETTVQRFWNREHDILVCTTIVETGLDISNANTLIVERADTFGLSQLHQLRGRVGRSRERGYAYFLYPPQVPLTETAYDRLATIAQNNELGAGMAVALKDLEIRGAGNVLGIEQSGHVAGVGFDLYVRLVGEALETYRDAYRAAADGQTVRTAEEPKDVRIDLPVDAHLPPDYIASDRLRLEGYRRLAAASSDREVAAVVDELTDRYGALPEPARRLAAVARLRLLCRGSGITDVTAASAATVRLSPLTLPDSAQVRLKRMYPGAHYRATTATVQVPIPRAGGLGAPRIRDVELVQMVADLITALAGKPRQHIGITNPSPPGEDGRGRNTTIKERQP</sequence>
<reference key="1">
    <citation type="journal article" date="2002" name="J. Bacteriol.">
        <title>Whole-genome comparison of Mycobacterium tuberculosis clinical and laboratory strains.</title>
        <authorList>
            <person name="Fleischmann R.D."/>
            <person name="Alland D."/>
            <person name="Eisen J.A."/>
            <person name="Carpenter L."/>
            <person name="White O."/>
            <person name="Peterson J.D."/>
            <person name="DeBoy R.T."/>
            <person name="Dodson R.J."/>
            <person name="Gwinn M.L."/>
            <person name="Haft D.H."/>
            <person name="Hickey E.K."/>
            <person name="Kolonay J.F."/>
            <person name="Nelson W.C."/>
            <person name="Umayam L.A."/>
            <person name="Ermolaeva M.D."/>
            <person name="Salzberg S.L."/>
            <person name="Delcher A."/>
            <person name="Utterback T.R."/>
            <person name="Weidman J.F."/>
            <person name="Khouri H.M."/>
            <person name="Gill J."/>
            <person name="Mikula A."/>
            <person name="Bishai W."/>
            <person name="Jacobs W.R. Jr."/>
            <person name="Venter J.C."/>
            <person name="Fraser C.M."/>
        </authorList>
    </citation>
    <scope>NUCLEOTIDE SEQUENCE [LARGE SCALE GENOMIC DNA]</scope>
    <source>
        <strain>CDC 1551 / Oshkosh</strain>
    </source>
</reference>
<protein>
    <recommendedName>
        <fullName evidence="1">Transcription-repair-coupling factor</fullName>
        <shortName evidence="1">TRCF</shortName>
        <ecNumber evidence="1">3.6.4.-</ecNumber>
    </recommendedName>
</protein>
<gene>
    <name evidence="1" type="primary">mfd</name>
    <name type="ordered locus">MT1048</name>
</gene>
<accession>P9WMQ4</accession>
<accession>L0T5H3</accession>
<accession>P64326</accession>
<accession>P96380</accession>
<evidence type="ECO:0000255" key="1">
    <source>
        <dbReference type="HAMAP-Rule" id="MF_00969"/>
    </source>
</evidence>
<evidence type="ECO:0000256" key="2">
    <source>
        <dbReference type="SAM" id="MobiDB-lite"/>
    </source>
</evidence>
<proteinExistence type="inferred from homology"/>
<feature type="chain" id="PRO_0000427263" description="Transcription-repair-coupling factor">
    <location>
        <begin position="1"/>
        <end position="1234"/>
    </location>
</feature>
<feature type="domain" description="Helicase ATP-binding" evidence="1">
    <location>
        <begin position="663"/>
        <end position="824"/>
    </location>
</feature>
<feature type="domain" description="Helicase C-terminal" evidence="1">
    <location>
        <begin position="842"/>
        <end position="999"/>
    </location>
</feature>
<feature type="region of interest" description="Disordered" evidence="2">
    <location>
        <begin position="1207"/>
        <end position="1234"/>
    </location>
</feature>
<feature type="short sequence motif" description="DEEQ box">
    <location>
        <begin position="777"/>
        <end position="780"/>
    </location>
</feature>
<feature type="compositionally biased region" description="Basic and acidic residues" evidence="2">
    <location>
        <begin position="1220"/>
        <end position="1234"/>
    </location>
</feature>
<feature type="binding site" evidence="1">
    <location>
        <begin position="676"/>
        <end position="683"/>
    </location>
    <ligand>
        <name>ATP</name>
        <dbReference type="ChEBI" id="CHEBI:30616"/>
    </ligand>
</feature>